<reference key="1">
    <citation type="journal article" date="2000" name="Biochim. Biophys. Acta">
        <title>New isoforms of cytochrome c oxidase subunit IV in tuna fish.</title>
        <authorList>
            <person name="Huettemann M."/>
        </authorList>
    </citation>
    <scope>NUCLEOTIDE SEQUENCE [MRNA]</scope>
    <source>
        <tissue>Heart</tissue>
        <tissue>Liver</tissue>
        <tissue>Muscle</tissue>
    </source>
</reference>
<organism>
    <name type="scientific">Thunnus obesus</name>
    <name type="common">Bigeye tuna</name>
    <dbReference type="NCBI Taxonomy" id="8241"/>
    <lineage>
        <taxon>Eukaryota</taxon>
        <taxon>Metazoa</taxon>
        <taxon>Chordata</taxon>
        <taxon>Craniata</taxon>
        <taxon>Vertebrata</taxon>
        <taxon>Euteleostomi</taxon>
        <taxon>Actinopterygii</taxon>
        <taxon>Neopterygii</taxon>
        <taxon>Teleostei</taxon>
        <taxon>Neoteleostei</taxon>
        <taxon>Acanthomorphata</taxon>
        <taxon>Pelagiaria</taxon>
        <taxon>Scombriformes</taxon>
        <taxon>Scombridae</taxon>
        <taxon>Thunnus</taxon>
    </lineage>
</organism>
<keyword id="KW-0472">Membrane</keyword>
<keyword id="KW-0496">Mitochondrion</keyword>
<keyword id="KW-0999">Mitochondrion inner membrane</keyword>
<keyword id="KW-0809">Transit peptide</keyword>
<keyword id="KW-0812">Transmembrane</keyword>
<keyword id="KW-1133">Transmembrane helix</keyword>
<evidence type="ECO:0000250" key="1"/>
<evidence type="ECO:0000250" key="2">
    <source>
        <dbReference type="UniProtKB" id="P00423"/>
    </source>
</evidence>
<evidence type="ECO:0000250" key="3">
    <source>
        <dbReference type="UniProtKB" id="P00424"/>
    </source>
</evidence>
<evidence type="ECO:0000305" key="4"/>
<name>COX41_THUOB</name>
<proteinExistence type="evidence at transcript level"/>
<accession>Q9I8U0</accession>
<comment type="function">
    <text evidence="3">Component of the cytochrome c oxidase, the last enzyme in the mitochondrial electron transport chain which drives oxidative phosphorylation. The respiratory chain contains 3 multisubunit complexes succinate dehydrogenase (complex II, CII), ubiquinol-cytochrome c oxidoreductase (cytochrome b-c1 complex, complex III, CIII) and cytochrome c oxidase (complex IV, CIV), that cooperate to transfer electrons derived from NADH and succinate to molecular oxygen, creating an electrochemical gradient over the inner membrane that drives transmembrane transport and the ATP synthase. Cytochrome c oxidase is the component of the respiratory chain that catalyzes the reduction of oxygen to water. Electrons originating from reduced cytochrome c in the intermembrane space (IMS) are transferred via the dinuclear copper A center (CU(A)) of subunit 2 and heme A of subunit 1 to the active site in subunit 1, a binuclear center (BNC) formed by heme A3 and copper B (CU(B)). The BNC reduces molecular oxygen to 2 water molecules using 4 electrons from cytochrome c in the IMS and 4 protons from the mitochondrial matrix.</text>
</comment>
<comment type="pathway">
    <text evidence="3">Energy metabolism; oxidative phosphorylation.</text>
</comment>
<comment type="subunit">
    <text evidence="2">Component of the cytochrome c oxidase (complex IV, CIV), a multisubunit enzyme composed of 14 subunits. The complex is composed of a catalytic core of 3 subunits MT-CO1, MT-CO2 and MT-CO3, encoded in the mitochondrial DNA, and 11 supernumerary subunits COX4I, COX5A, COX5B, COX6A, COX6B, COX6C, COX7A, COX7B, COX7C, COX8 and NDUFA4, which are encoded in the nuclear genome. The complex exists as a monomer or a dimer and forms supercomplexes (SCs) in the inner mitochondrial membrane with NADH-ubiquinone oxidoreductase (complex I, CI) and ubiquinol-cytochrome c oxidoreductase (cytochrome b-c1 complex, complex III, CIII), resulting in different assemblies (supercomplex SCI(1)III(2)IV(1) and megacomplex MCI(2)III(2)IV(2)).</text>
</comment>
<comment type="subcellular location">
    <subcellularLocation>
        <location evidence="2">Mitochondrion inner membrane</location>
        <topology evidence="2">Single-pass membrane protein</topology>
    </subcellularLocation>
</comment>
<comment type="similarity">
    <text evidence="4">Belongs to the cytochrome c oxidase IV family.</text>
</comment>
<feature type="transit peptide" description="Mitochondrion" evidence="1">
    <location>
        <begin position="1"/>
        <end position="22"/>
    </location>
</feature>
<feature type="chain" id="PRO_0000006092" description="Cytochrome c oxidase subunit 4 isoform 1, mitochondrial">
    <location>
        <begin position="23"/>
        <end position="169"/>
    </location>
</feature>
<feature type="topological domain" description="Mitochondrial matrix" evidence="2">
    <location>
        <begin position="23"/>
        <end position="98"/>
    </location>
</feature>
<feature type="transmembrane region" description="Helical" evidence="2">
    <location>
        <begin position="99"/>
        <end position="124"/>
    </location>
</feature>
<feature type="topological domain" description="Mitochondrial intermembrane" evidence="2">
    <location>
        <begin position="125"/>
        <end position="169"/>
    </location>
</feature>
<dbReference type="EMBL" id="AF204870">
    <property type="protein sequence ID" value="AAF79933.1"/>
    <property type="molecule type" value="mRNA"/>
</dbReference>
<dbReference type="SMR" id="Q9I8U0"/>
<dbReference type="UniPathway" id="UPA00705"/>
<dbReference type="GO" id="GO:0005743">
    <property type="term" value="C:mitochondrial inner membrane"/>
    <property type="evidence" value="ECO:0007669"/>
    <property type="project" value="UniProtKB-SubCell"/>
</dbReference>
<dbReference type="GO" id="GO:0045277">
    <property type="term" value="C:respiratory chain complex IV"/>
    <property type="evidence" value="ECO:0007669"/>
    <property type="project" value="InterPro"/>
</dbReference>
<dbReference type="GO" id="GO:0006123">
    <property type="term" value="P:mitochondrial electron transport, cytochrome c to oxygen"/>
    <property type="evidence" value="ECO:0007669"/>
    <property type="project" value="InterPro"/>
</dbReference>
<dbReference type="CDD" id="cd00922">
    <property type="entry name" value="Cyt_c_Oxidase_IV"/>
    <property type="match status" value="1"/>
</dbReference>
<dbReference type="FunFam" id="1.10.442.10:FF:000001">
    <property type="entry name" value="Cytochrome c oxidase subunit 4 isoform 1"/>
    <property type="match status" value="1"/>
</dbReference>
<dbReference type="Gene3D" id="1.10.442.10">
    <property type="entry name" value="Cytochrome c oxidase subunit IV"/>
    <property type="match status" value="1"/>
</dbReference>
<dbReference type="InterPro" id="IPR013288">
    <property type="entry name" value="Cyt_c_oxidase_su4"/>
</dbReference>
<dbReference type="InterPro" id="IPR004203">
    <property type="entry name" value="Cyt_c_oxidase_su4_fam"/>
</dbReference>
<dbReference type="InterPro" id="IPR036639">
    <property type="entry name" value="Cyt_c_oxidase_su4_sf"/>
</dbReference>
<dbReference type="PANTHER" id="PTHR10707:SF12">
    <property type="entry name" value="CYTOCHROME C OXIDASE SUBUNIT 4 ISOFORM 1, MITOCHONDRIAL"/>
    <property type="match status" value="1"/>
</dbReference>
<dbReference type="PANTHER" id="PTHR10707">
    <property type="entry name" value="CYTOCHROME C OXIDASE SUBUNIT IV"/>
    <property type="match status" value="1"/>
</dbReference>
<dbReference type="Pfam" id="PF02936">
    <property type="entry name" value="COX4"/>
    <property type="match status" value="1"/>
</dbReference>
<dbReference type="PRINTS" id="PR01873">
    <property type="entry name" value="CYTCOXIDASE4"/>
</dbReference>
<dbReference type="SUPFAM" id="SSF81406">
    <property type="entry name" value="Mitochondrial cytochrome c oxidase subunit IV"/>
    <property type="match status" value="1"/>
</dbReference>
<protein>
    <recommendedName>
        <fullName>Cytochrome c oxidase subunit 4 isoform 1, mitochondrial</fullName>
    </recommendedName>
    <alternativeName>
        <fullName>Cytochrome c oxidase subunit IV isoform 1</fullName>
        <shortName>COX IV-1</shortName>
    </alternativeName>
</protein>
<sequence length="169" mass="19277">MLATGALSLVGKRAISTSVCLRGGHGVAKVEEYTLPAYFDRRENPLPDICYVQALSPEQQSLKEKEKGSWAALSNEEKIALYRISFKQSFAEMNKGSSEWKSVVGGMLFFIGFTGLVVLWQRKYVYGAVPHTFDPEYKAKELQRMLDMRINPVEGFSAHWDYENKQWKK</sequence>